<name>AROA_SHOC1</name>
<feature type="chain" id="PRO_0000088226" description="3-phosphoshikimate 1-carboxyvinyltransferase">
    <location>
        <begin position="1"/>
        <end position="430"/>
    </location>
</feature>
<feature type="active site" description="Proton acceptor" evidence="1">
    <location>
        <position position="318"/>
    </location>
</feature>
<feature type="binding site" evidence="1">
    <location>
        <position position="25"/>
    </location>
    <ligand>
        <name>3-phosphoshikimate</name>
        <dbReference type="ChEBI" id="CHEBI:145989"/>
    </ligand>
</feature>
<feature type="binding site" evidence="1">
    <location>
        <position position="25"/>
    </location>
    <ligand>
        <name>phosphoenolpyruvate</name>
        <dbReference type="ChEBI" id="CHEBI:58702"/>
    </ligand>
</feature>
<feature type="binding site" evidence="1">
    <location>
        <position position="26"/>
    </location>
    <ligand>
        <name>3-phosphoshikimate</name>
        <dbReference type="ChEBI" id="CHEBI:145989"/>
    </ligand>
</feature>
<feature type="binding site" evidence="1">
    <location>
        <position position="30"/>
    </location>
    <ligand>
        <name>3-phosphoshikimate</name>
        <dbReference type="ChEBI" id="CHEBI:145989"/>
    </ligand>
</feature>
<feature type="binding site" evidence="1">
    <location>
        <position position="97"/>
    </location>
    <ligand>
        <name>phosphoenolpyruvate</name>
        <dbReference type="ChEBI" id="CHEBI:58702"/>
    </ligand>
</feature>
<feature type="binding site" evidence="1">
    <location>
        <position position="125"/>
    </location>
    <ligand>
        <name>phosphoenolpyruvate</name>
        <dbReference type="ChEBI" id="CHEBI:58702"/>
    </ligand>
</feature>
<feature type="binding site" evidence="1">
    <location>
        <position position="170"/>
    </location>
    <ligand>
        <name>3-phosphoshikimate</name>
        <dbReference type="ChEBI" id="CHEBI:145989"/>
    </ligand>
</feature>
<feature type="binding site" evidence="1">
    <location>
        <position position="172"/>
    </location>
    <ligand>
        <name>3-phosphoshikimate</name>
        <dbReference type="ChEBI" id="CHEBI:145989"/>
    </ligand>
</feature>
<feature type="binding site" evidence="1">
    <location>
        <position position="172"/>
    </location>
    <ligand>
        <name>phosphoenolpyruvate</name>
        <dbReference type="ChEBI" id="CHEBI:58702"/>
    </ligand>
</feature>
<feature type="binding site" evidence="1">
    <location>
        <position position="318"/>
    </location>
    <ligand>
        <name>3-phosphoshikimate</name>
        <dbReference type="ChEBI" id="CHEBI:145989"/>
    </ligand>
</feature>
<feature type="binding site" evidence="1">
    <location>
        <position position="345"/>
    </location>
    <ligand>
        <name>3-phosphoshikimate</name>
        <dbReference type="ChEBI" id="CHEBI:145989"/>
    </ligand>
</feature>
<feature type="binding site" evidence="1">
    <location>
        <position position="349"/>
    </location>
    <ligand>
        <name>phosphoenolpyruvate</name>
        <dbReference type="ChEBI" id="CHEBI:58702"/>
    </ligand>
</feature>
<feature type="binding site" evidence="1">
    <location>
        <position position="391"/>
    </location>
    <ligand>
        <name>phosphoenolpyruvate</name>
        <dbReference type="ChEBI" id="CHEBI:58702"/>
    </ligand>
</feature>
<protein>
    <recommendedName>
        <fullName evidence="1">3-phosphoshikimate 1-carboxyvinyltransferase</fullName>
        <ecNumber evidence="1">2.5.1.19</ecNumber>
    </recommendedName>
    <alternativeName>
        <fullName evidence="1">5-enolpyruvylshikimate-3-phosphate synthase</fullName>
        <shortName evidence="1">EPSP synthase</shortName>
        <shortName evidence="1">EPSPS</shortName>
    </alternativeName>
</protein>
<proteinExistence type="inferred from homology"/>
<reference key="1">
    <citation type="submission" date="2003-10" db="EMBL/GenBank/DDBJ databases">
        <title>The complete genome sequence of the alkaliphilic Bacillus clausii KSM-K16.</title>
        <authorList>
            <person name="Takaki Y."/>
            <person name="Kageyama Y."/>
            <person name="Shimamura S."/>
            <person name="Suzuki H."/>
            <person name="Nishi S."/>
            <person name="Hatada Y."/>
            <person name="Kawai S."/>
            <person name="Ito S."/>
            <person name="Horikoshi K."/>
        </authorList>
    </citation>
    <scope>NUCLEOTIDE SEQUENCE [LARGE SCALE GENOMIC DNA]</scope>
    <source>
        <strain>KSM-K16</strain>
    </source>
</reference>
<keyword id="KW-0028">Amino-acid biosynthesis</keyword>
<keyword id="KW-0057">Aromatic amino acid biosynthesis</keyword>
<keyword id="KW-0963">Cytoplasm</keyword>
<keyword id="KW-1185">Reference proteome</keyword>
<keyword id="KW-0808">Transferase</keyword>
<gene>
    <name evidence="1" type="primary">aroA</name>
    <name type="synonym">aroE</name>
    <name type="ordered locus">ABC1903</name>
</gene>
<comment type="function">
    <text evidence="1">Catalyzes the transfer of the enolpyruvyl moiety of phosphoenolpyruvate (PEP) to the 5-hydroxyl of shikimate-3-phosphate (S3P) to produce enolpyruvyl shikimate-3-phosphate and inorganic phosphate.</text>
</comment>
<comment type="catalytic activity">
    <reaction evidence="1">
        <text>3-phosphoshikimate + phosphoenolpyruvate = 5-O-(1-carboxyvinyl)-3-phosphoshikimate + phosphate</text>
        <dbReference type="Rhea" id="RHEA:21256"/>
        <dbReference type="ChEBI" id="CHEBI:43474"/>
        <dbReference type="ChEBI" id="CHEBI:57701"/>
        <dbReference type="ChEBI" id="CHEBI:58702"/>
        <dbReference type="ChEBI" id="CHEBI:145989"/>
        <dbReference type="EC" id="2.5.1.19"/>
    </reaction>
    <physiologicalReaction direction="left-to-right" evidence="1">
        <dbReference type="Rhea" id="RHEA:21257"/>
    </physiologicalReaction>
</comment>
<comment type="pathway">
    <text evidence="1">Metabolic intermediate biosynthesis; chorismate biosynthesis; chorismate from D-erythrose 4-phosphate and phosphoenolpyruvate: step 6/7.</text>
</comment>
<comment type="subunit">
    <text evidence="1">Monomer.</text>
</comment>
<comment type="subcellular location">
    <subcellularLocation>
        <location evidence="1">Cytoplasm</location>
    </subcellularLocation>
</comment>
<comment type="similarity">
    <text evidence="1">Belongs to the EPSP synthase family.</text>
</comment>
<accession>Q5WGR7</accession>
<organism>
    <name type="scientific">Shouchella clausii (strain KSM-K16)</name>
    <name type="common">Alkalihalobacillus clausii</name>
    <dbReference type="NCBI Taxonomy" id="66692"/>
    <lineage>
        <taxon>Bacteria</taxon>
        <taxon>Bacillati</taxon>
        <taxon>Bacillota</taxon>
        <taxon>Bacilli</taxon>
        <taxon>Bacillales</taxon>
        <taxon>Bacillaceae</taxon>
        <taxon>Shouchella</taxon>
    </lineage>
</organism>
<dbReference type="EC" id="2.5.1.19" evidence="1"/>
<dbReference type="EMBL" id="AP006627">
    <property type="protein sequence ID" value="BAD64438.1"/>
    <property type="molecule type" value="Genomic_DNA"/>
</dbReference>
<dbReference type="RefSeq" id="WP_011246746.1">
    <property type="nucleotide sequence ID" value="NC_006582.1"/>
</dbReference>
<dbReference type="SMR" id="Q5WGR7"/>
<dbReference type="STRING" id="66692.ABC1903"/>
<dbReference type="KEGG" id="bcl:ABC1903"/>
<dbReference type="eggNOG" id="COG0128">
    <property type="taxonomic scope" value="Bacteria"/>
</dbReference>
<dbReference type="HOGENOM" id="CLU_024321_0_1_9"/>
<dbReference type="OrthoDB" id="9809920at2"/>
<dbReference type="UniPathway" id="UPA00053">
    <property type="reaction ID" value="UER00089"/>
</dbReference>
<dbReference type="Proteomes" id="UP000001168">
    <property type="component" value="Chromosome"/>
</dbReference>
<dbReference type="GO" id="GO:0005737">
    <property type="term" value="C:cytoplasm"/>
    <property type="evidence" value="ECO:0007669"/>
    <property type="project" value="UniProtKB-SubCell"/>
</dbReference>
<dbReference type="GO" id="GO:0003866">
    <property type="term" value="F:3-phosphoshikimate 1-carboxyvinyltransferase activity"/>
    <property type="evidence" value="ECO:0007669"/>
    <property type="project" value="UniProtKB-UniRule"/>
</dbReference>
<dbReference type="GO" id="GO:0008652">
    <property type="term" value="P:amino acid biosynthetic process"/>
    <property type="evidence" value="ECO:0007669"/>
    <property type="project" value="UniProtKB-KW"/>
</dbReference>
<dbReference type="GO" id="GO:0009073">
    <property type="term" value="P:aromatic amino acid family biosynthetic process"/>
    <property type="evidence" value="ECO:0007669"/>
    <property type="project" value="UniProtKB-KW"/>
</dbReference>
<dbReference type="GO" id="GO:0009423">
    <property type="term" value="P:chorismate biosynthetic process"/>
    <property type="evidence" value="ECO:0007669"/>
    <property type="project" value="UniProtKB-UniRule"/>
</dbReference>
<dbReference type="CDD" id="cd01556">
    <property type="entry name" value="EPSP_synthase"/>
    <property type="match status" value="1"/>
</dbReference>
<dbReference type="FunFam" id="3.65.10.10:FF:000005">
    <property type="entry name" value="3-phosphoshikimate 1-carboxyvinyltransferase"/>
    <property type="match status" value="1"/>
</dbReference>
<dbReference type="FunFam" id="3.65.10.10:FF:000006">
    <property type="entry name" value="3-phosphoshikimate 1-carboxyvinyltransferase"/>
    <property type="match status" value="1"/>
</dbReference>
<dbReference type="Gene3D" id="3.65.10.10">
    <property type="entry name" value="Enolpyruvate transferase domain"/>
    <property type="match status" value="2"/>
</dbReference>
<dbReference type="HAMAP" id="MF_00210">
    <property type="entry name" value="EPSP_synth"/>
    <property type="match status" value="1"/>
</dbReference>
<dbReference type="InterPro" id="IPR001986">
    <property type="entry name" value="Enolpyruvate_Tfrase_dom"/>
</dbReference>
<dbReference type="InterPro" id="IPR036968">
    <property type="entry name" value="Enolpyruvate_Tfrase_sf"/>
</dbReference>
<dbReference type="InterPro" id="IPR006264">
    <property type="entry name" value="EPSP_synthase"/>
</dbReference>
<dbReference type="InterPro" id="IPR023193">
    <property type="entry name" value="EPSP_synthase_CS"/>
</dbReference>
<dbReference type="InterPro" id="IPR013792">
    <property type="entry name" value="RNA3'P_cycl/enolpyr_Trfase_a/b"/>
</dbReference>
<dbReference type="NCBIfam" id="TIGR01356">
    <property type="entry name" value="aroA"/>
    <property type="match status" value="1"/>
</dbReference>
<dbReference type="PANTHER" id="PTHR21090">
    <property type="entry name" value="AROM/DEHYDROQUINATE SYNTHASE"/>
    <property type="match status" value="1"/>
</dbReference>
<dbReference type="PANTHER" id="PTHR21090:SF5">
    <property type="entry name" value="PENTAFUNCTIONAL AROM POLYPEPTIDE"/>
    <property type="match status" value="1"/>
</dbReference>
<dbReference type="Pfam" id="PF00275">
    <property type="entry name" value="EPSP_synthase"/>
    <property type="match status" value="1"/>
</dbReference>
<dbReference type="PIRSF" id="PIRSF000505">
    <property type="entry name" value="EPSPS"/>
    <property type="match status" value="1"/>
</dbReference>
<dbReference type="SUPFAM" id="SSF55205">
    <property type="entry name" value="EPT/RTPC-like"/>
    <property type="match status" value="1"/>
</dbReference>
<dbReference type="PROSITE" id="PS00104">
    <property type="entry name" value="EPSP_SYNTHASE_1"/>
    <property type="match status" value="1"/>
</dbReference>
<dbReference type="PROSITE" id="PS00885">
    <property type="entry name" value="EPSP_SYNTHASE_2"/>
    <property type="match status" value="1"/>
</dbReference>
<evidence type="ECO:0000255" key="1">
    <source>
        <dbReference type="HAMAP-Rule" id="MF_00210"/>
    </source>
</evidence>
<sequence length="430" mass="44875">MDETIKLLNKAESGLSGTIVVPGDKSISHRAVMFGAMANGTTNVSGFLPGDDCLSTIACFRQMGVAIEQEGDKVTVEGKGLDGLKEPNGVLDVGNSGTTIRLLLGVLSGRPFHSVVVGDDSIGKRPMARVTAPLRQMGAQIDGRETGNKTPLSIRGGQTKAIEYTMPVASAQVKSALLLAGLQAEGETSVTEPQTTRDHTERMLHAFGVKVTTAGKTISIQGGQSLQAADVVVPGDISSAAFFLVAGCIVPGSRVHLKNVGLNPTRAGILEVLKRSGAKLSIDEQVTTGGEPRGDMTISTSELSPFVIEGEEVPTLIDEIPVLAVLATQISGTTIIRDAEELKVKETNRIDTVVGELAKLGADIEATDDGMIIRGGKPLTGGKVDSHGDHRIGMALVIASLCANGPVELANIGAISVSYPQFFEHLQSLQ</sequence>